<dbReference type="EC" id="2.7.6.3" evidence="1"/>
<dbReference type="EMBL" id="AE014074">
    <property type="protein sequence ID" value="AAM79369.1"/>
    <property type="molecule type" value="Genomic_DNA"/>
</dbReference>
<dbReference type="RefSeq" id="WP_011054470.1">
    <property type="nucleotide sequence ID" value="NC_004070.1"/>
</dbReference>
<dbReference type="SMR" id="P0DB10"/>
<dbReference type="KEGG" id="spg:SpyM3_0762"/>
<dbReference type="HOGENOM" id="CLU_097916_3_0_9"/>
<dbReference type="UniPathway" id="UPA00077">
    <property type="reaction ID" value="UER00155"/>
</dbReference>
<dbReference type="Proteomes" id="UP000000564">
    <property type="component" value="Chromosome"/>
</dbReference>
<dbReference type="GO" id="GO:0003848">
    <property type="term" value="F:2-amino-4-hydroxy-6-hydroxymethyldihydropteridine diphosphokinase activity"/>
    <property type="evidence" value="ECO:0007669"/>
    <property type="project" value="UniProtKB-EC"/>
</dbReference>
<dbReference type="GO" id="GO:0005524">
    <property type="term" value="F:ATP binding"/>
    <property type="evidence" value="ECO:0007669"/>
    <property type="project" value="UniProtKB-KW"/>
</dbReference>
<dbReference type="GO" id="GO:0016301">
    <property type="term" value="F:kinase activity"/>
    <property type="evidence" value="ECO:0007669"/>
    <property type="project" value="UniProtKB-KW"/>
</dbReference>
<dbReference type="GO" id="GO:0046656">
    <property type="term" value="P:folic acid biosynthetic process"/>
    <property type="evidence" value="ECO:0007669"/>
    <property type="project" value="UniProtKB-KW"/>
</dbReference>
<dbReference type="GO" id="GO:0046654">
    <property type="term" value="P:tetrahydrofolate biosynthetic process"/>
    <property type="evidence" value="ECO:0007669"/>
    <property type="project" value="UniProtKB-UniPathway"/>
</dbReference>
<dbReference type="CDD" id="cd00483">
    <property type="entry name" value="HPPK"/>
    <property type="match status" value="1"/>
</dbReference>
<dbReference type="Gene3D" id="3.30.70.560">
    <property type="entry name" value="7,8-Dihydro-6-hydroxymethylpterin-pyrophosphokinase HPPK"/>
    <property type="match status" value="1"/>
</dbReference>
<dbReference type="InterPro" id="IPR000550">
    <property type="entry name" value="Hppk"/>
</dbReference>
<dbReference type="InterPro" id="IPR035907">
    <property type="entry name" value="Hppk_sf"/>
</dbReference>
<dbReference type="NCBIfam" id="TIGR01498">
    <property type="entry name" value="folK"/>
    <property type="match status" value="1"/>
</dbReference>
<dbReference type="PANTHER" id="PTHR43071">
    <property type="entry name" value="2-AMINO-4-HYDROXY-6-HYDROXYMETHYLDIHYDROPTERIDINE PYROPHOSPHOKINASE"/>
    <property type="match status" value="1"/>
</dbReference>
<dbReference type="PANTHER" id="PTHR43071:SF1">
    <property type="entry name" value="2-AMINO-4-HYDROXY-6-HYDROXYMETHYLDIHYDROPTERIDINE PYROPHOSPHOKINASE"/>
    <property type="match status" value="1"/>
</dbReference>
<dbReference type="Pfam" id="PF01288">
    <property type="entry name" value="HPPK"/>
    <property type="match status" value="1"/>
</dbReference>
<dbReference type="SUPFAM" id="SSF55083">
    <property type="entry name" value="6-hydroxymethyl-7,8-dihydropterin pyrophosphokinase, HPPK"/>
    <property type="match status" value="1"/>
</dbReference>
<dbReference type="PROSITE" id="PS00794">
    <property type="entry name" value="HPPK"/>
    <property type="match status" value="1"/>
</dbReference>
<evidence type="ECO:0000250" key="1">
    <source>
        <dbReference type="UniProtKB" id="P26281"/>
    </source>
</evidence>
<evidence type="ECO:0000305" key="2"/>
<keyword id="KW-0067">ATP-binding</keyword>
<keyword id="KW-0289">Folate biosynthesis</keyword>
<keyword id="KW-0418">Kinase</keyword>
<keyword id="KW-0547">Nucleotide-binding</keyword>
<keyword id="KW-0808">Transferase</keyword>
<name>HPPK_STRP3</name>
<feature type="chain" id="PRO_0000168261" description="2-amino-4-hydroxy-6-hydroxymethyldihydropteridine pyrophosphokinase">
    <location>
        <begin position="1"/>
        <end position="162"/>
    </location>
</feature>
<protein>
    <recommendedName>
        <fullName evidence="1">2-amino-4-hydroxy-6-hydroxymethyldihydropteridine pyrophosphokinase</fullName>
        <ecNumber evidence="1">2.7.6.3</ecNumber>
    </recommendedName>
    <alternativeName>
        <fullName evidence="1">6-hydroxymethyl-7,8-dihydropterin pyrophosphokinase</fullName>
        <shortName evidence="1">PPPK</shortName>
    </alternativeName>
    <alternativeName>
        <fullName evidence="1">7,8-dihydro-6-hydroxymethylpterin-pyrophosphokinase</fullName>
        <shortName evidence="1">HPPK</shortName>
    </alternativeName>
</protein>
<proteinExistence type="inferred from homology"/>
<sequence length="162" mass="18374">MTIVYLSLGTNMGDRAAYLQKALEALADLPQTRLLAQSSIYETTAWGKTSQADFLNMAYQLDTQLTAADFLKETQAIEQSLGRVRHEKWGSRTIDIDILLFGEEVYDTKELKVPHPYMTERAFVLIPLLELQPDLKLPPNHKLLRDYLAALDQSDITLFSAQ</sequence>
<accession>P0DB10</accession>
<accession>Q8K7K6</accession>
<organism>
    <name type="scientific">Streptococcus pyogenes serotype M3 (strain ATCC BAA-595 / MGAS315)</name>
    <dbReference type="NCBI Taxonomy" id="198466"/>
    <lineage>
        <taxon>Bacteria</taxon>
        <taxon>Bacillati</taxon>
        <taxon>Bacillota</taxon>
        <taxon>Bacilli</taxon>
        <taxon>Lactobacillales</taxon>
        <taxon>Streptococcaceae</taxon>
        <taxon>Streptococcus</taxon>
    </lineage>
</organism>
<comment type="function">
    <text evidence="1">Catalyzes the transfer of pyrophosphate from adenosine triphosphate (ATP) to 6-hydroxymethyl-7,8-dihydropterin, an enzymatic step in folate biosynthesis pathway.</text>
</comment>
<comment type="catalytic activity">
    <reaction evidence="1">
        <text>6-hydroxymethyl-7,8-dihydropterin + ATP = (7,8-dihydropterin-6-yl)methyl diphosphate + AMP + H(+)</text>
        <dbReference type="Rhea" id="RHEA:11412"/>
        <dbReference type="ChEBI" id="CHEBI:15378"/>
        <dbReference type="ChEBI" id="CHEBI:30616"/>
        <dbReference type="ChEBI" id="CHEBI:44841"/>
        <dbReference type="ChEBI" id="CHEBI:72950"/>
        <dbReference type="ChEBI" id="CHEBI:456215"/>
        <dbReference type="EC" id="2.7.6.3"/>
    </reaction>
</comment>
<comment type="pathway">
    <text evidence="1">Cofactor biosynthesis; tetrahydrofolate biosynthesis; 2-amino-4-hydroxy-6-hydroxymethyl-7,8-dihydropteridine diphosphate from 7,8-dihydroneopterin triphosphate: step 4/4.</text>
</comment>
<comment type="similarity">
    <text evidence="2">Belongs to the HPPK family.</text>
</comment>
<gene>
    <name type="primary">folK</name>
    <name type="ordered locus">SpyM3_0762</name>
</gene>
<reference key="1">
    <citation type="journal article" date="2002" name="Proc. Natl. Acad. Sci. U.S.A.">
        <title>Genome sequence of a serotype M3 strain of group A Streptococcus: phage-encoded toxins, the high-virulence phenotype, and clone emergence.</title>
        <authorList>
            <person name="Beres S.B."/>
            <person name="Sylva G.L."/>
            <person name="Barbian K.D."/>
            <person name="Lei B."/>
            <person name="Hoff J.S."/>
            <person name="Mammarella N.D."/>
            <person name="Liu M.-Y."/>
            <person name="Smoot J.C."/>
            <person name="Porcella S.F."/>
            <person name="Parkins L.D."/>
            <person name="Campbell D.S."/>
            <person name="Smith T.M."/>
            <person name="McCormick J.K."/>
            <person name="Leung D.Y.M."/>
            <person name="Schlievert P.M."/>
            <person name="Musser J.M."/>
        </authorList>
    </citation>
    <scope>NUCLEOTIDE SEQUENCE [LARGE SCALE GENOMIC DNA]</scope>
    <source>
        <strain>ATCC BAA-595 / MGAS315</strain>
    </source>
</reference>